<feature type="chain" id="PRO_0000269154" description="Small ribosomal subunit protein uS14">
    <location>
        <begin position="1"/>
        <end position="61"/>
    </location>
</feature>
<feature type="binding site" evidence="1">
    <location>
        <position position="24"/>
    </location>
    <ligand>
        <name>Zn(2+)</name>
        <dbReference type="ChEBI" id="CHEBI:29105"/>
    </ligand>
</feature>
<feature type="binding site" evidence="1">
    <location>
        <position position="27"/>
    </location>
    <ligand>
        <name>Zn(2+)</name>
        <dbReference type="ChEBI" id="CHEBI:29105"/>
    </ligand>
</feature>
<feature type="binding site" evidence="1">
    <location>
        <position position="40"/>
    </location>
    <ligand>
        <name>Zn(2+)</name>
        <dbReference type="ChEBI" id="CHEBI:29105"/>
    </ligand>
</feature>
<feature type="binding site" evidence="1">
    <location>
        <position position="43"/>
    </location>
    <ligand>
        <name>Zn(2+)</name>
        <dbReference type="ChEBI" id="CHEBI:29105"/>
    </ligand>
</feature>
<comment type="function">
    <text evidence="1">Binds 16S rRNA, required for the assembly of 30S particles and may also be responsible for determining the conformation of the 16S rRNA at the A site.</text>
</comment>
<comment type="cofactor">
    <cofactor evidence="1">
        <name>Zn(2+)</name>
        <dbReference type="ChEBI" id="CHEBI:29105"/>
    </cofactor>
    <text evidence="1">Binds 1 zinc ion per subunit.</text>
</comment>
<comment type="subunit">
    <text evidence="1">Part of the 30S ribosomal subunit. Contacts proteins S3 and S10.</text>
</comment>
<comment type="similarity">
    <text evidence="1">Belongs to the universal ribosomal protein uS14 family. Zinc-binding uS14 subfamily.</text>
</comment>
<evidence type="ECO:0000255" key="1">
    <source>
        <dbReference type="HAMAP-Rule" id="MF_01364"/>
    </source>
</evidence>
<evidence type="ECO:0000305" key="2"/>
<accession>Q47LK6</accession>
<dbReference type="EMBL" id="CP000088">
    <property type="protein sequence ID" value="AAZ56666.1"/>
    <property type="molecule type" value="Genomic_DNA"/>
</dbReference>
<dbReference type="RefSeq" id="WP_011293056.1">
    <property type="nucleotide sequence ID" value="NC_007333.1"/>
</dbReference>
<dbReference type="SMR" id="Q47LK6"/>
<dbReference type="STRING" id="269800.Tfu_2633"/>
<dbReference type="KEGG" id="tfu:Tfu_2633"/>
<dbReference type="eggNOG" id="COG0199">
    <property type="taxonomic scope" value="Bacteria"/>
</dbReference>
<dbReference type="HOGENOM" id="CLU_139869_3_0_11"/>
<dbReference type="OrthoDB" id="9810484at2"/>
<dbReference type="GO" id="GO:0005737">
    <property type="term" value="C:cytoplasm"/>
    <property type="evidence" value="ECO:0007669"/>
    <property type="project" value="UniProtKB-ARBA"/>
</dbReference>
<dbReference type="GO" id="GO:0015935">
    <property type="term" value="C:small ribosomal subunit"/>
    <property type="evidence" value="ECO:0007669"/>
    <property type="project" value="TreeGrafter"/>
</dbReference>
<dbReference type="GO" id="GO:0019843">
    <property type="term" value="F:rRNA binding"/>
    <property type="evidence" value="ECO:0007669"/>
    <property type="project" value="UniProtKB-UniRule"/>
</dbReference>
<dbReference type="GO" id="GO:0003735">
    <property type="term" value="F:structural constituent of ribosome"/>
    <property type="evidence" value="ECO:0007669"/>
    <property type="project" value="InterPro"/>
</dbReference>
<dbReference type="GO" id="GO:0008270">
    <property type="term" value="F:zinc ion binding"/>
    <property type="evidence" value="ECO:0007669"/>
    <property type="project" value="UniProtKB-UniRule"/>
</dbReference>
<dbReference type="GO" id="GO:0006412">
    <property type="term" value="P:translation"/>
    <property type="evidence" value="ECO:0007669"/>
    <property type="project" value="UniProtKB-UniRule"/>
</dbReference>
<dbReference type="FunFam" id="4.10.830.10:FF:000001">
    <property type="entry name" value="30S ribosomal protein S14 type Z"/>
    <property type="match status" value="1"/>
</dbReference>
<dbReference type="Gene3D" id="4.10.830.10">
    <property type="entry name" value="30s Ribosomal Protein S14, Chain N"/>
    <property type="match status" value="1"/>
</dbReference>
<dbReference type="HAMAP" id="MF_01364_B">
    <property type="entry name" value="Ribosomal_uS14_2_B"/>
    <property type="match status" value="1"/>
</dbReference>
<dbReference type="InterPro" id="IPR001209">
    <property type="entry name" value="Ribosomal_uS14"/>
</dbReference>
<dbReference type="InterPro" id="IPR023053">
    <property type="entry name" value="Ribosomal_uS14_bact"/>
</dbReference>
<dbReference type="InterPro" id="IPR018271">
    <property type="entry name" value="Ribosomal_uS14_CS"/>
</dbReference>
<dbReference type="InterPro" id="IPR043140">
    <property type="entry name" value="Ribosomal_uS14_sf"/>
</dbReference>
<dbReference type="NCBIfam" id="NF005974">
    <property type="entry name" value="PRK08061.1"/>
    <property type="match status" value="1"/>
</dbReference>
<dbReference type="PANTHER" id="PTHR19836">
    <property type="entry name" value="30S RIBOSOMAL PROTEIN S14"/>
    <property type="match status" value="1"/>
</dbReference>
<dbReference type="PANTHER" id="PTHR19836:SF19">
    <property type="entry name" value="SMALL RIBOSOMAL SUBUNIT PROTEIN US14M"/>
    <property type="match status" value="1"/>
</dbReference>
<dbReference type="Pfam" id="PF00253">
    <property type="entry name" value="Ribosomal_S14"/>
    <property type="match status" value="1"/>
</dbReference>
<dbReference type="SUPFAM" id="SSF57716">
    <property type="entry name" value="Glucocorticoid receptor-like (DNA-binding domain)"/>
    <property type="match status" value="1"/>
</dbReference>
<dbReference type="PROSITE" id="PS00527">
    <property type="entry name" value="RIBOSOMAL_S14"/>
    <property type="match status" value="1"/>
</dbReference>
<sequence>MAKKALIAKANRKPKFRVRAYTRCSRCGRPRAVFRKFGLCRICFREMAHRGELPGVTKASW</sequence>
<gene>
    <name evidence="1" type="primary">rpsZ</name>
    <name evidence="1" type="synonym">rpsN</name>
    <name type="ordered locus">Tfu_2633</name>
</gene>
<keyword id="KW-0479">Metal-binding</keyword>
<keyword id="KW-0687">Ribonucleoprotein</keyword>
<keyword id="KW-0689">Ribosomal protein</keyword>
<keyword id="KW-0694">RNA-binding</keyword>
<keyword id="KW-0699">rRNA-binding</keyword>
<keyword id="KW-0862">Zinc</keyword>
<organism>
    <name type="scientific">Thermobifida fusca (strain YX)</name>
    <dbReference type="NCBI Taxonomy" id="269800"/>
    <lineage>
        <taxon>Bacteria</taxon>
        <taxon>Bacillati</taxon>
        <taxon>Actinomycetota</taxon>
        <taxon>Actinomycetes</taxon>
        <taxon>Streptosporangiales</taxon>
        <taxon>Nocardiopsidaceae</taxon>
        <taxon>Thermobifida</taxon>
    </lineage>
</organism>
<protein>
    <recommendedName>
        <fullName evidence="1">Small ribosomal subunit protein uS14</fullName>
    </recommendedName>
    <alternativeName>
        <fullName evidence="2">30S ribosomal protein S14 type Z</fullName>
    </alternativeName>
</protein>
<name>RS14Z_THEFY</name>
<reference key="1">
    <citation type="journal article" date="2007" name="J. Bacteriol.">
        <title>Genome sequence and analysis of the soil cellulolytic actinomycete Thermobifida fusca YX.</title>
        <authorList>
            <person name="Lykidis A."/>
            <person name="Mavromatis K."/>
            <person name="Ivanova N."/>
            <person name="Anderson I."/>
            <person name="Land M."/>
            <person name="DiBartolo G."/>
            <person name="Martinez M."/>
            <person name="Lapidus A."/>
            <person name="Lucas S."/>
            <person name="Copeland A."/>
            <person name="Richardson P."/>
            <person name="Wilson D.B."/>
            <person name="Kyrpides N."/>
        </authorList>
    </citation>
    <scope>NUCLEOTIDE SEQUENCE [LARGE SCALE GENOMIC DNA]</scope>
    <source>
        <strain>YX</strain>
    </source>
</reference>
<proteinExistence type="inferred from homology"/>